<keyword id="KW-0010">Activator</keyword>
<keyword id="KW-0238">DNA-binding</keyword>
<keyword id="KW-0614">Plasmid</keyword>
<keyword id="KW-0804">Transcription</keyword>
<keyword id="KW-0805">Transcription regulation</keyword>
<keyword id="KW-0843">Virulence</keyword>
<protein>
    <recommendedName>
        <fullName>Virulence regulon transcriptional activator VirF</fullName>
    </recommendedName>
</protein>
<evidence type="ECO:0000250" key="1">
    <source>
        <dbReference type="UniProtKB" id="P0A2T1"/>
    </source>
</evidence>
<evidence type="ECO:0000250" key="2">
    <source>
        <dbReference type="UniProtKB" id="P16114"/>
    </source>
</evidence>
<evidence type="ECO:0000255" key="3">
    <source>
        <dbReference type="PROSITE-ProRule" id="PRU00593"/>
    </source>
</evidence>
<organism>
    <name type="scientific">Shigella sonnei</name>
    <dbReference type="NCBI Taxonomy" id="624"/>
    <lineage>
        <taxon>Bacteria</taxon>
        <taxon>Pseudomonadati</taxon>
        <taxon>Pseudomonadota</taxon>
        <taxon>Gammaproteobacteria</taxon>
        <taxon>Enterobacterales</taxon>
        <taxon>Enterobacteriaceae</taxon>
        <taxon>Shigella</taxon>
    </lineage>
</organism>
<sequence>MMDMGHKNKIDIKVRLHNYIILYAKRCSMTVSSGNETLTIDEGQIAFIERNIQINVSIKKSDSINPFEIISLDRNLLLSIIRIMEPIYSFQHSYSEEKRGLNKKIFLLSEEEVSIDLFKSIKEMPFGKRKIYSLACLLSAVSDEEALYTSISIASSLSFSDQIRKIVEKNIEKRWRLSDISNNLNLSEIAVRKRLESEKLTFQQILLDIRMHHAAKLLLNSQSYINDVSRLIGISSPSYFIRKFNEYYGITPKKFYLYHKKF</sequence>
<gene>
    <name type="primary">virF</name>
</gene>
<comment type="function">
    <text evidence="1">Primary regulator of plasmid-encoded virulence genes. Activates the transcription of icsA (virG) and of virB, which is an activator of the ipaABCD virulence regulon (By similarity).</text>
</comment>
<comment type="subunit">
    <text evidence="2">Homodimer.</text>
</comment>
<name>VIRF_SHISO</name>
<dbReference type="PIR" id="A60105">
    <property type="entry name" value="A60105"/>
</dbReference>
<dbReference type="RefSeq" id="WP_005116773.1">
    <property type="nucleotide sequence ID" value="NZ_UIQD01000296.1"/>
</dbReference>
<dbReference type="SMR" id="P0A2T3"/>
<dbReference type="STRING" id="216599.GCA_000283715_05164"/>
<dbReference type="PATRIC" id="fig|624.635.peg.5076"/>
<dbReference type="OMA" id="FQISHRC"/>
<dbReference type="GO" id="GO:0003700">
    <property type="term" value="F:DNA-binding transcription factor activity"/>
    <property type="evidence" value="ECO:0007669"/>
    <property type="project" value="InterPro"/>
</dbReference>
<dbReference type="GO" id="GO:0043565">
    <property type="term" value="F:sequence-specific DNA binding"/>
    <property type="evidence" value="ECO:0007669"/>
    <property type="project" value="InterPro"/>
</dbReference>
<dbReference type="Gene3D" id="1.10.10.60">
    <property type="entry name" value="Homeodomain-like"/>
    <property type="match status" value="1"/>
</dbReference>
<dbReference type="InterPro" id="IPR009057">
    <property type="entry name" value="Homeodomain-like_sf"/>
</dbReference>
<dbReference type="InterPro" id="IPR018060">
    <property type="entry name" value="HTH_AraC"/>
</dbReference>
<dbReference type="InterPro" id="IPR018062">
    <property type="entry name" value="HTH_AraC-typ_CS"/>
</dbReference>
<dbReference type="InterPro" id="IPR020449">
    <property type="entry name" value="Tscrpt_reg_AraC-type_HTH"/>
</dbReference>
<dbReference type="PANTHER" id="PTHR43280">
    <property type="entry name" value="ARAC-FAMILY TRANSCRIPTIONAL REGULATOR"/>
    <property type="match status" value="1"/>
</dbReference>
<dbReference type="PANTHER" id="PTHR43280:SF33">
    <property type="entry name" value="HTH-TYPE TRANSCRIPTIONAL REGULATOR APPY-RELATED"/>
    <property type="match status" value="1"/>
</dbReference>
<dbReference type="Pfam" id="PF12833">
    <property type="entry name" value="HTH_18"/>
    <property type="match status" value="1"/>
</dbReference>
<dbReference type="PRINTS" id="PR00032">
    <property type="entry name" value="HTHARAC"/>
</dbReference>
<dbReference type="SMART" id="SM00342">
    <property type="entry name" value="HTH_ARAC"/>
    <property type="match status" value="1"/>
</dbReference>
<dbReference type="SUPFAM" id="SSF46689">
    <property type="entry name" value="Homeodomain-like"/>
    <property type="match status" value="1"/>
</dbReference>
<dbReference type="PROSITE" id="PS00041">
    <property type="entry name" value="HTH_ARAC_FAMILY_1"/>
    <property type="match status" value="1"/>
</dbReference>
<dbReference type="PROSITE" id="PS01124">
    <property type="entry name" value="HTH_ARAC_FAMILY_2"/>
    <property type="match status" value="1"/>
</dbReference>
<reference key="1">
    <citation type="journal article" date="1989" name="Infect. Immun.">
        <title>Cloning of regions required for contact hemolysis and entry into LLC-MK2 cells from Shigella sonnei form I plasmid: virF is a positive regulator gene for these phenotypes.</title>
        <authorList>
            <person name="Kato J."/>
            <person name="Ito K."/>
            <person name="Nakamura A."/>
            <person name="Watanabe H."/>
        </authorList>
    </citation>
    <scope>NUCLEOTIDE SEQUENCE [GENOMIC DNA]</scope>
    <source>
        <strain>HW383</strain>
    </source>
</reference>
<proteinExistence type="inferred from homology"/>
<geneLocation type="plasmid">
    <name>pINV</name>
</geneLocation>
<accession>P0A2T3</accession>
<accession>Q04248</accession>
<accession>Q9AFW5</accession>
<feature type="chain" id="PRO_0000194595" description="Virulence regulon transcriptional activator VirF">
    <location>
        <begin position="1"/>
        <end position="262"/>
    </location>
</feature>
<feature type="domain" description="HTH araC/xylS-type" evidence="3">
    <location>
        <begin position="161"/>
        <end position="258"/>
    </location>
</feature>
<feature type="DNA-binding region" description="H-T-H motif" evidence="3">
    <location>
        <begin position="178"/>
        <end position="199"/>
    </location>
</feature>
<feature type="DNA-binding region" description="H-T-H motif" evidence="3">
    <location>
        <begin position="225"/>
        <end position="248"/>
    </location>
</feature>